<gene>
    <name type="ORF">DDB_G0281301</name>
</gene>
<organism>
    <name type="scientific">Dictyostelium discoideum</name>
    <name type="common">Social amoeba</name>
    <dbReference type="NCBI Taxonomy" id="44689"/>
    <lineage>
        <taxon>Eukaryota</taxon>
        <taxon>Amoebozoa</taxon>
        <taxon>Evosea</taxon>
        <taxon>Eumycetozoa</taxon>
        <taxon>Dictyostelia</taxon>
        <taxon>Dictyosteliales</taxon>
        <taxon>Dictyosteliaceae</taxon>
        <taxon>Dictyostelium</taxon>
    </lineage>
</organism>
<evidence type="ECO:0000255" key="1">
    <source>
        <dbReference type="PROSITE-ProRule" id="PRU00186"/>
    </source>
</evidence>
<evidence type="ECO:0000256" key="2">
    <source>
        <dbReference type="SAM" id="MobiDB-lite"/>
    </source>
</evidence>
<evidence type="ECO:0000305" key="3"/>
<name>Y1301_DICDI</name>
<comment type="similarity">
    <text evidence="3">Belongs to the UPF0746 family.</text>
</comment>
<dbReference type="EMBL" id="AAFI02000040">
    <property type="protein sequence ID" value="EAL66947.1"/>
    <property type="molecule type" value="Genomic_DNA"/>
</dbReference>
<dbReference type="RefSeq" id="XP_640814.1">
    <property type="nucleotide sequence ID" value="XM_635722.1"/>
</dbReference>
<dbReference type="SMR" id="Q54UG2"/>
<dbReference type="FunCoup" id="Q54UG2">
    <property type="interactions" value="1"/>
</dbReference>
<dbReference type="PaxDb" id="44689-DDB0220681"/>
<dbReference type="EnsemblProtists" id="EAL66947">
    <property type="protein sequence ID" value="EAL66947"/>
    <property type="gene ID" value="DDB_G0281301"/>
</dbReference>
<dbReference type="GeneID" id="8622868"/>
<dbReference type="KEGG" id="ddi:DDB_G0281301"/>
<dbReference type="dictyBase" id="DDB_G0281301"/>
<dbReference type="VEuPathDB" id="AmoebaDB:DDB_G0281301"/>
<dbReference type="eggNOG" id="ENOG502RSNK">
    <property type="taxonomic scope" value="Eukaryota"/>
</dbReference>
<dbReference type="HOGENOM" id="CLU_283779_0_0_1"/>
<dbReference type="InParanoid" id="Q54UG2"/>
<dbReference type="OMA" id="YERALCK"/>
<dbReference type="PhylomeDB" id="Q54UG2"/>
<dbReference type="PRO" id="PR:Q54UG2"/>
<dbReference type="Proteomes" id="UP000002195">
    <property type="component" value="Chromosome 3"/>
</dbReference>
<dbReference type="GO" id="GO:0003677">
    <property type="term" value="F:DNA binding"/>
    <property type="evidence" value="ECO:0007669"/>
    <property type="project" value="UniProtKB-KW"/>
</dbReference>
<dbReference type="InterPro" id="IPR003034">
    <property type="entry name" value="SAP_dom"/>
</dbReference>
<dbReference type="InterPro" id="IPR051904">
    <property type="entry name" value="UPF0746_actin_org"/>
</dbReference>
<dbReference type="PANTHER" id="PTHR32488">
    <property type="entry name" value="UPF0746 PROTEIN DDB_G0280785-RELATED"/>
    <property type="match status" value="1"/>
</dbReference>
<dbReference type="PANTHER" id="PTHR32488:SF86">
    <property type="entry name" value="UPF0746 PROTEIN DDB_G0280785-RELATED"/>
    <property type="match status" value="1"/>
</dbReference>
<dbReference type="Pfam" id="PF18953">
    <property type="entry name" value="SAP_new25"/>
    <property type="match status" value="1"/>
</dbReference>
<dbReference type="PROSITE" id="PS50800">
    <property type="entry name" value="SAP"/>
    <property type="match status" value="1"/>
</dbReference>
<proteinExistence type="inferred from homology"/>
<accession>Q54UG2</accession>
<keyword id="KW-0238">DNA-binding</keyword>
<keyword id="KW-1185">Reference proteome</keyword>
<protein>
    <recommendedName>
        <fullName>UPF0746 protein DDB_G0281301</fullName>
    </recommendedName>
</protein>
<sequence length="953" mass="112572">MVNNKRKEIENQENDNNDDNDGLLTYKKFKEDINYDSIRSKELQTIAKSLGLPIIGKKQEIYKRIEGYFLSKKVKSDLINSTTNQLQQQPQQPQQQRYVLLIKDVDQLEIYFWKAFRNMIIFKNIFSNFKSKQFGYHDLIGINENFLKSYSNSLEIIKDNIKGNINHQIIRSVNDILNIIKTLKKKDNETISFYNTLFSAFSSTTTQSIKSLIFQFDENIDLWIQRMILNENLVALDQFIKFFKINSDVLKKSIEMHINPSFFNVVTYNNLKIYNYLKSINAIPTSHIKQRFSNIDLSDSLSFDCKLKRLIKSYKLLVDPTNFKKIQEIHQQEEEEQKQQKLNSDKDYIEKLNQLILELSEIESIHFTNDQLNSTIKNLLNQTTTTTTTTTTTTTTTTPILITNNNNSGDIKDIIKKYYKSIYLFFKIIKEGNLYNRNLMKPIHYYLYFKKEKSLIQLYEIFCGKNYTHYLIFFKSILMDQNLEKNQILELVSNILDIENGVPFQNIGCIYNFNLRSFNSFCKVVFSINDTELIDHLIKTIKKLQLVYDSKTKFPSISEIISTNFQYINKNEIVDFFFENYRNETTLFDDQNQNWYNGHVNIIDHYEKLMESIEKRLRLNIVYYYDWFTNVNKINEKKYNINILLDQLKRAISKPLLYSFFNDSGYYYNKLLIIFGWSLENGNEFLINNILSNEQFKQPFRFSEIIDSVLPPNKMSNSVKLIFNNISKESIESKLYQVKVKFNFSYVHGYYYDDFIPLTSTISTTTTTTTTNSEEVGQFIIGETKSFDFTISPRILFVCLYYLDRVDDIFYLFDKIPEIFNSGYFSNFTQESYLYNICSSYYLGLFINYFIENLNDNTINHLYTCLCVASRKGFIQIFQDILSSNKNSQYLLKVRTKTNQSSLFQSNLLCDMVVNSINSSNFQLSNLLIDFIDFSPKNEKVLRSKIFKSSNNK</sequence>
<feature type="chain" id="PRO_0000377739" description="UPF0746 protein DDB_G0281301">
    <location>
        <begin position="1"/>
        <end position="953"/>
    </location>
</feature>
<feature type="domain" description="SAP" evidence="1">
    <location>
        <begin position="35"/>
        <end position="69"/>
    </location>
</feature>
<feature type="region of interest" description="Disordered" evidence="2">
    <location>
        <begin position="1"/>
        <end position="23"/>
    </location>
</feature>
<feature type="compositionally biased region" description="Basic and acidic residues" evidence="2">
    <location>
        <begin position="1"/>
        <end position="10"/>
    </location>
</feature>
<feature type="compositionally biased region" description="Acidic residues" evidence="2">
    <location>
        <begin position="11"/>
        <end position="21"/>
    </location>
</feature>
<reference key="1">
    <citation type="journal article" date="2005" name="Nature">
        <title>The genome of the social amoeba Dictyostelium discoideum.</title>
        <authorList>
            <person name="Eichinger L."/>
            <person name="Pachebat J.A."/>
            <person name="Gloeckner G."/>
            <person name="Rajandream M.A."/>
            <person name="Sucgang R."/>
            <person name="Berriman M."/>
            <person name="Song J."/>
            <person name="Olsen R."/>
            <person name="Szafranski K."/>
            <person name="Xu Q."/>
            <person name="Tunggal B."/>
            <person name="Kummerfeld S."/>
            <person name="Madera M."/>
            <person name="Konfortov B.A."/>
            <person name="Rivero F."/>
            <person name="Bankier A.T."/>
            <person name="Lehmann R."/>
            <person name="Hamlin N."/>
            <person name="Davies R."/>
            <person name="Gaudet P."/>
            <person name="Fey P."/>
            <person name="Pilcher K."/>
            <person name="Chen G."/>
            <person name="Saunders D."/>
            <person name="Sodergren E.J."/>
            <person name="Davis P."/>
            <person name="Kerhornou A."/>
            <person name="Nie X."/>
            <person name="Hall N."/>
            <person name="Anjard C."/>
            <person name="Hemphill L."/>
            <person name="Bason N."/>
            <person name="Farbrother P."/>
            <person name="Desany B."/>
            <person name="Just E."/>
            <person name="Morio T."/>
            <person name="Rost R."/>
            <person name="Churcher C.M."/>
            <person name="Cooper J."/>
            <person name="Haydock S."/>
            <person name="van Driessche N."/>
            <person name="Cronin A."/>
            <person name="Goodhead I."/>
            <person name="Muzny D.M."/>
            <person name="Mourier T."/>
            <person name="Pain A."/>
            <person name="Lu M."/>
            <person name="Harper D."/>
            <person name="Lindsay R."/>
            <person name="Hauser H."/>
            <person name="James K.D."/>
            <person name="Quiles M."/>
            <person name="Madan Babu M."/>
            <person name="Saito T."/>
            <person name="Buchrieser C."/>
            <person name="Wardroper A."/>
            <person name="Felder M."/>
            <person name="Thangavelu M."/>
            <person name="Johnson D."/>
            <person name="Knights A."/>
            <person name="Loulseged H."/>
            <person name="Mungall K.L."/>
            <person name="Oliver K."/>
            <person name="Price C."/>
            <person name="Quail M.A."/>
            <person name="Urushihara H."/>
            <person name="Hernandez J."/>
            <person name="Rabbinowitsch E."/>
            <person name="Steffen D."/>
            <person name="Sanders M."/>
            <person name="Ma J."/>
            <person name="Kohara Y."/>
            <person name="Sharp S."/>
            <person name="Simmonds M.N."/>
            <person name="Spiegler S."/>
            <person name="Tivey A."/>
            <person name="Sugano S."/>
            <person name="White B."/>
            <person name="Walker D."/>
            <person name="Woodward J.R."/>
            <person name="Winckler T."/>
            <person name="Tanaka Y."/>
            <person name="Shaulsky G."/>
            <person name="Schleicher M."/>
            <person name="Weinstock G.M."/>
            <person name="Rosenthal A."/>
            <person name="Cox E.C."/>
            <person name="Chisholm R.L."/>
            <person name="Gibbs R.A."/>
            <person name="Loomis W.F."/>
            <person name="Platzer M."/>
            <person name="Kay R.R."/>
            <person name="Williams J.G."/>
            <person name="Dear P.H."/>
            <person name="Noegel A.A."/>
            <person name="Barrell B.G."/>
            <person name="Kuspa A."/>
        </authorList>
    </citation>
    <scope>NUCLEOTIDE SEQUENCE [LARGE SCALE GENOMIC DNA]</scope>
    <source>
        <strain>AX4</strain>
    </source>
</reference>